<accession>Q9K4A7</accession>
<name>AROA1_STRCO</name>
<protein>
    <recommendedName>
        <fullName evidence="1">3-phosphoshikimate 1-carboxyvinyltransferase 1</fullName>
        <ecNumber evidence="1">2.5.1.19</ecNumber>
    </recommendedName>
    <alternativeName>
        <fullName evidence="1">5-enolpyruvylshikimate-3-phosphate synthase 1</fullName>
        <shortName evidence="1">EPSP synthase 1</shortName>
        <shortName evidence="1">EPSPS 1</shortName>
    </alternativeName>
</protein>
<comment type="function">
    <text evidence="1">Catalyzes the transfer of the enolpyruvyl moiety of phosphoenolpyruvate (PEP) to the 5-hydroxyl of shikimate-3-phosphate (S3P) to produce enolpyruvyl shikimate-3-phosphate and inorganic phosphate.</text>
</comment>
<comment type="catalytic activity">
    <reaction evidence="1">
        <text>3-phosphoshikimate + phosphoenolpyruvate = 5-O-(1-carboxyvinyl)-3-phosphoshikimate + phosphate</text>
        <dbReference type="Rhea" id="RHEA:21256"/>
        <dbReference type="ChEBI" id="CHEBI:43474"/>
        <dbReference type="ChEBI" id="CHEBI:57701"/>
        <dbReference type="ChEBI" id="CHEBI:58702"/>
        <dbReference type="ChEBI" id="CHEBI:145989"/>
        <dbReference type="EC" id="2.5.1.19"/>
    </reaction>
    <physiologicalReaction direction="left-to-right" evidence="1">
        <dbReference type="Rhea" id="RHEA:21257"/>
    </physiologicalReaction>
</comment>
<comment type="pathway">
    <text evidence="1">Metabolic intermediate biosynthesis; chorismate biosynthesis; chorismate from D-erythrose 4-phosphate and phosphoenolpyruvate: step 6/7.</text>
</comment>
<comment type="subunit">
    <text evidence="1">Monomer.</text>
</comment>
<comment type="subcellular location">
    <subcellularLocation>
        <location evidence="1">Cytoplasm</location>
    </subcellularLocation>
</comment>
<comment type="similarity">
    <text evidence="1 2">Belongs to the EPSP synthase family.</text>
</comment>
<proteinExistence type="inferred from homology"/>
<reference key="1">
    <citation type="journal article" date="2002" name="Nature">
        <title>Complete genome sequence of the model actinomycete Streptomyces coelicolor A3(2).</title>
        <authorList>
            <person name="Bentley S.D."/>
            <person name="Chater K.F."/>
            <person name="Cerdeno-Tarraga A.-M."/>
            <person name="Challis G.L."/>
            <person name="Thomson N.R."/>
            <person name="James K.D."/>
            <person name="Harris D.E."/>
            <person name="Quail M.A."/>
            <person name="Kieser H."/>
            <person name="Harper D."/>
            <person name="Bateman A."/>
            <person name="Brown S."/>
            <person name="Chandra G."/>
            <person name="Chen C.W."/>
            <person name="Collins M."/>
            <person name="Cronin A."/>
            <person name="Fraser A."/>
            <person name="Goble A."/>
            <person name="Hidalgo J."/>
            <person name="Hornsby T."/>
            <person name="Howarth S."/>
            <person name="Huang C.-H."/>
            <person name="Kieser T."/>
            <person name="Larke L."/>
            <person name="Murphy L.D."/>
            <person name="Oliver K."/>
            <person name="O'Neil S."/>
            <person name="Rabbinowitsch E."/>
            <person name="Rajandream M.A."/>
            <person name="Rutherford K.M."/>
            <person name="Rutter S."/>
            <person name="Seeger K."/>
            <person name="Saunders D."/>
            <person name="Sharp S."/>
            <person name="Squares R."/>
            <person name="Squares S."/>
            <person name="Taylor K."/>
            <person name="Warren T."/>
            <person name="Wietzorrek A."/>
            <person name="Woodward J.R."/>
            <person name="Barrell B.G."/>
            <person name="Parkhill J."/>
            <person name="Hopwood D.A."/>
        </authorList>
    </citation>
    <scope>NUCLEOTIDE SEQUENCE [LARGE SCALE GENOMIC DNA]</scope>
    <source>
        <strain>ATCC BAA-471 / A3(2) / M145</strain>
    </source>
</reference>
<keyword id="KW-0028">Amino-acid biosynthesis</keyword>
<keyword id="KW-0057">Aromatic amino acid biosynthesis</keyword>
<keyword id="KW-0963">Cytoplasm</keyword>
<keyword id="KW-1185">Reference proteome</keyword>
<keyword id="KW-0808">Transferase</keyword>
<dbReference type="EC" id="2.5.1.19" evidence="1"/>
<dbReference type="EMBL" id="AL939122">
    <property type="protein sequence ID" value="CAB94597.1"/>
    <property type="molecule type" value="Genomic_DNA"/>
</dbReference>
<dbReference type="RefSeq" id="NP_629359.1">
    <property type="nucleotide sequence ID" value="NC_003888.3"/>
</dbReference>
<dbReference type="SMR" id="Q9K4A7"/>
<dbReference type="FunCoup" id="Q9K4A7">
    <property type="interactions" value="251"/>
</dbReference>
<dbReference type="STRING" id="100226.gene:17762863"/>
<dbReference type="PaxDb" id="100226-SCO5212"/>
<dbReference type="KEGG" id="sco:SCO5212"/>
<dbReference type="PATRIC" id="fig|100226.15.peg.5296"/>
<dbReference type="eggNOG" id="COG0128">
    <property type="taxonomic scope" value="Bacteria"/>
</dbReference>
<dbReference type="HOGENOM" id="CLU_024321_0_0_11"/>
<dbReference type="InParanoid" id="Q9K4A7"/>
<dbReference type="OrthoDB" id="9809920at2"/>
<dbReference type="PhylomeDB" id="Q9K4A7"/>
<dbReference type="UniPathway" id="UPA00053">
    <property type="reaction ID" value="UER00089"/>
</dbReference>
<dbReference type="Proteomes" id="UP000001973">
    <property type="component" value="Chromosome"/>
</dbReference>
<dbReference type="GO" id="GO:0005737">
    <property type="term" value="C:cytoplasm"/>
    <property type="evidence" value="ECO:0007669"/>
    <property type="project" value="UniProtKB-SubCell"/>
</dbReference>
<dbReference type="GO" id="GO:0003866">
    <property type="term" value="F:3-phosphoshikimate 1-carboxyvinyltransferase activity"/>
    <property type="evidence" value="ECO:0000318"/>
    <property type="project" value="GO_Central"/>
</dbReference>
<dbReference type="GO" id="GO:0008652">
    <property type="term" value="P:amino acid biosynthetic process"/>
    <property type="evidence" value="ECO:0007669"/>
    <property type="project" value="UniProtKB-KW"/>
</dbReference>
<dbReference type="GO" id="GO:0009073">
    <property type="term" value="P:aromatic amino acid family biosynthetic process"/>
    <property type="evidence" value="ECO:0007669"/>
    <property type="project" value="UniProtKB-KW"/>
</dbReference>
<dbReference type="GO" id="GO:0009423">
    <property type="term" value="P:chorismate biosynthetic process"/>
    <property type="evidence" value="ECO:0000318"/>
    <property type="project" value="GO_Central"/>
</dbReference>
<dbReference type="CDD" id="cd01556">
    <property type="entry name" value="EPSP_synthase"/>
    <property type="match status" value="1"/>
</dbReference>
<dbReference type="FunFam" id="3.65.10.10:FF:000010">
    <property type="entry name" value="3-phosphoshikimate 1-carboxyvinyltransferase"/>
    <property type="match status" value="1"/>
</dbReference>
<dbReference type="FunFam" id="3.65.10.10:FF:000011">
    <property type="entry name" value="3-phosphoshikimate 1-carboxyvinyltransferase"/>
    <property type="match status" value="1"/>
</dbReference>
<dbReference type="Gene3D" id="3.65.10.10">
    <property type="entry name" value="Enolpyruvate transferase domain"/>
    <property type="match status" value="2"/>
</dbReference>
<dbReference type="HAMAP" id="MF_00210">
    <property type="entry name" value="EPSP_synth"/>
    <property type="match status" value="1"/>
</dbReference>
<dbReference type="InterPro" id="IPR001986">
    <property type="entry name" value="Enolpyruvate_Tfrase_dom"/>
</dbReference>
<dbReference type="InterPro" id="IPR036968">
    <property type="entry name" value="Enolpyruvate_Tfrase_sf"/>
</dbReference>
<dbReference type="InterPro" id="IPR006264">
    <property type="entry name" value="EPSP_synthase"/>
</dbReference>
<dbReference type="InterPro" id="IPR023193">
    <property type="entry name" value="EPSP_synthase_CS"/>
</dbReference>
<dbReference type="InterPro" id="IPR013792">
    <property type="entry name" value="RNA3'P_cycl/enolpyr_Trfase_a/b"/>
</dbReference>
<dbReference type="NCBIfam" id="TIGR01356">
    <property type="entry name" value="aroA"/>
    <property type="match status" value="1"/>
</dbReference>
<dbReference type="PANTHER" id="PTHR21090">
    <property type="entry name" value="AROM/DEHYDROQUINATE SYNTHASE"/>
    <property type="match status" value="1"/>
</dbReference>
<dbReference type="PANTHER" id="PTHR21090:SF5">
    <property type="entry name" value="PENTAFUNCTIONAL AROM POLYPEPTIDE"/>
    <property type="match status" value="1"/>
</dbReference>
<dbReference type="Pfam" id="PF00275">
    <property type="entry name" value="EPSP_synthase"/>
    <property type="match status" value="1"/>
</dbReference>
<dbReference type="PIRSF" id="PIRSF000505">
    <property type="entry name" value="EPSPS"/>
    <property type="match status" value="1"/>
</dbReference>
<dbReference type="SUPFAM" id="SSF55205">
    <property type="entry name" value="EPT/RTPC-like"/>
    <property type="match status" value="1"/>
</dbReference>
<dbReference type="PROSITE" id="PS00104">
    <property type="entry name" value="EPSP_SYNTHASE_1"/>
    <property type="match status" value="1"/>
</dbReference>
<dbReference type="PROSITE" id="PS00885">
    <property type="entry name" value="EPSP_SYNTHASE_2"/>
    <property type="match status" value="1"/>
</dbReference>
<organism>
    <name type="scientific">Streptomyces coelicolor (strain ATCC BAA-471 / A3(2) / M145)</name>
    <dbReference type="NCBI Taxonomy" id="100226"/>
    <lineage>
        <taxon>Bacteria</taxon>
        <taxon>Bacillati</taxon>
        <taxon>Actinomycetota</taxon>
        <taxon>Actinomycetes</taxon>
        <taxon>Kitasatosporales</taxon>
        <taxon>Streptomycetaceae</taxon>
        <taxon>Streptomyces</taxon>
        <taxon>Streptomyces albidoflavus group</taxon>
    </lineage>
</organism>
<evidence type="ECO:0000255" key="1">
    <source>
        <dbReference type="HAMAP-Rule" id="MF_00210"/>
    </source>
</evidence>
<evidence type="ECO:0000305" key="2"/>
<feature type="chain" id="PRO_0000088302" description="3-phosphoshikimate 1-carboxyvinyltransferase 1">
    <location>
        <begin position="1"/>
        <end position="438"/>
    </location>
</feature>
<feature type="active site" description="Proton acceptor" evidence="1">
    <location>
        <position position="326"/>
    </location>
</feature>
<feature type="binding site" evidence="1">
    <location>
        <position position="30"/>
    </location>
    <ligand>
        <name>3-phosphoshikimate</name>
        <dbReference type="ChEBI" id="CHEBI:145989"/>
    </ligand>
</feature>
<feature type="binding site" evidence="1">
    <location>
        <position position="30"/>
    </location>
    <ligand>
        <name>phosphoenolpyruvate</name>
        <dbReference type="ChEBI" id="CHEBI:58702"/>
    </ligand>
</feature>
<feature type="binding site" evidence="1">
    <location>
        <position position="31"/>
    </location>
    <ligand>
        <name>3-phosphoshikimate</name>
        <dbReference type="ChEBI" id="CHEBI:145989"/>
    </ligand>
</feature>
<feature type="binding site" evidence="1">
    <location>
        <position position="35"/>
    </location>
    <ligand>
        <name>3-phosphoshikimate</name>
        <dbReference type="ChEBI" id="CHEBI:145989"/>
    </ligand>
</feature>
<feature type="binding site" evidence="1">
    <location>
        <position position="104"/>
    </location>
    <ligand>
        <name>phosphoenolpyruvate</name>
        <dbReference type="ChEBI" id="CHEBI:58702"/>
    </ligand>
</feature>
<feature type="binding site" evidence="1">
    <location>
        <position position="132"/>
    </location>
    <ligand>
        <name>phosphoenolpyruvate</name>
        <dbReference type="ChEBI" id="CHEBI:58702"/>
    </ligand>
</feature>
<feature type="binding site" evidence="1">
    <location>
        <position position="178"/>
    </location>
    <ligand>
        <name>3-phosphoshikimate</name>
        <dbReference type="ChEBI" id="CHEBI:145989"/>
    </ligand>
</feature>
<feature type="binding site" evidence="1">
    <location>
        <position position="179"/>
    </location>
    <ligand>
        <name>3-phosphoshikimate</name>
        <dbReference type="ChEBI" id="CHEBI:145989"/>
    </ligand>
</feature>
<feature type="binding site" evidence="1">
    <location>
        <position position="180"/>
    </location>
    <ligand>
        <name>3-phosphoshikimate</name>
        <dbReference type="ChEBI" id="CHEBI:145989"/>
    </ligand>
</feature>
<feature type="binding site" evidence="1">
    <location>
        <position position="180"/>
    </location>
    <ligand>
        <name>phosphoenolpyruvate</name>
        <dbReference type="ChEBI" id="CHEBI:58702"/>
    </ligand>
</feature>
<feature type="binding site" evidence="1">
    <location>
        <position position="207"/>
    </location>
    <ligand>
        <name>3-phosphoshikimate</name>
        <dbReference type="ChEBI" id="CHEBI:145989"/>
    </ligand>
</feature>
<feature type="binding site" evidence="1">
    <location>
        <position position="326"/>
    </location>
    <ligand>
        <name>3-phosphoshikimate</name>
        <dbReference type="ChEBI" id="CHEBI:145989"/>
    </ligand>
</feature>
<feature type="binding site" evidence="1">
    <location>
        <position position="353"/>
    </location>
    <ligand>
        <name>3-phosphoshikimate</name>
        <dbReference type="ChEBI" id="CHEBI:145989"/>
    </ligand>
</feature>
<feature type="binding site" evidence="1">
    <location>
        <position position="357"/>
    </location>
    <ligand>
        <name>phosphoenolpyruvate</name>
        <dbReference type="ChEBI" id="CHEBI:58702"/>
    </ligand>
</feature>
<feature type="binding site" evidence="1">
    <location>
        <position position="398"/>
    </location>
    <ligand>
        <name>phosphoenolpyruvate</name>
        <dbReference type="ChEBI" id="CHEBI:58702"/>
    </ligand>
</feature>
<feature type="binding site" evidence="1">
    <location>
        <position position="423"/>
    </location>
    <ligand>
        <name>phosphoenolpyruvate</name>
        <dbReference type="ChEBI" id="CHEBI:58702"/>
    </ligand>
</feature>
<sequence>MTVNPTHTALWPAPHASGAVDATVHVPGSKSVTNRALVLAALASEPGWLRRPLRSRDTLLMAEALRTLGVEIEEGVGPEGTGEFWRVIPAGLRGPATVDVGNAGTVMRFLPPVATLADGAVRFDGDPRSYERPLHGVIDALRVLGARIDDDGRGALPLTVHGGGALEGGPVEIDASSSSQFVSALLLSGPRFNQGVEVRHTGSALPSMPHIRMTVDMLRAVGAQVDTPESGGEPNVWRVTPGALLGRDLTVEPDLSNAQPFLAAALVTGGKVVIPDWPSRTTQPGDRLREIFTDMGGSCELTDFGLVFTGSGAIHGIDVDLSEVGELTPGIAAVAALADSPSTLRGVAHLRLHETDRLAALTKEINELGGDVTETADGLHIRPRRLHGGVFHTYDDHRMATAGAVLGLAVEGVQIENVATTAKTLPDFPDLWTGMLGA</sequence>
<gene>
    <name evidence="1" type="primary">aroA1</name>
    <name type="synonym">aroA2</name>
    <name type="ordered locus">SCO5212</name>
    <name type="ORF">SC7E4.09c</name>
</gene>